<feature type="chain" id="PRO_0000165826" description="Cytosol aminopeptidase">
    <location>
        <begin position="1"/>
        <end position="519"/>
    </location>
</feature>
<feature type="active site" evidence="1">
    <location>
        <position position="294"/>
    </location>
</feature>
<feature type="active site" evidence="1">
    <location>
        <position position="368"/>
    </location>
</feature>
<feature type="binding site" evidence="1">
    <location>
        <position position="202"/>
    </location>
    <ligand>
        <name>Zn(2+)</name>
        <dbReference type="ChEBI" id="CHEBI:29105"/>
        <label>3</label>
        <note>structural</note>
    </ligand>
</feature>
<feature type="binding site" evidence="1">
    <location>
        <position position="203"/>
    </location>
    <ligand>
        <name>Zn(2+)</name>
        <dbReference type="ChEBI" id="CHEBI:29105"/>
        <label>3</label>
        <note>structural</note>
    </ligand>
</feature>
<feature type="binding site" evidence="1">
    <location>
        <position position="282"/>
    </location>
    <ligand>
        <name>substrate</name>
    </ligand>
</feature>
<feature type="binding site" evidence="1">
    <location>
        <position position="282"/>
    </location>
    <ligand>
        <name>Zn(2+)</name>
        <dbReference type="ChEBI" id="CHEBI:29105"/>
        <label>2</label>
        <note>catalytic</note>
    </ligand>
</feature>
<feature type="binding site" evidence="1">
    <location>
        <position position="287"/>
    </location>
    <ligand>
        <name>Mg(2+)</name>
        <dbReference type="ChEBI" id="CHEBI:18420"/>
        <note>catalytic</note>
    </ligand>
</feature>
<feature type="binding site" evidence="1">
    <location>
        <position position="287"/>
    </location>
    <ligand>
        <name>substrate</name>
    </ligand>
</feature>
<feature type="binding site" evidence="1">
    <location>
        <position position="287"/>
    </location>
    <ligand>
        <name>Zn(2+)</name>
        <dbReference type="ChEBI" id="CHEBI:29105"/>
        <label>1</label>
        <note>catalytic</note>
    </ligand>
</feature>
<feature type="binding site" evidence="1">
    <location>
        <position position="287"/>
    </location>
    <ligand>
        <name>Zn(2+)</name>
        <dbReference type="ChEBI" id="CHEBI:29105"/>
        <label>2</label>
        <note>catalytic</note>
    </ligand>
</feature>
<feature type="binding site" evidence="1">
    <location>
        <position position="292"/>
    </location>
    <ligand>
        <name>substrate</name>
    </ligand>
</feature>
<feature type="binding site" evidence="1">
    <location>
        <position position="294"/>
    </location>
    <ligand>
        <name>substrate</name>
    </ligand>
</feature>
<feature type="binding site" evidence="1">
    <location>
        <position position="303"/>
    </location>
    <ligand>
        <name>Zn(2+)</name>
        <dbReference type="ChEBI" id="CHEBI:29105"/>
        <label>3</label>
        <note>structural</note>
    </ligand>
</feature>
<feature type="binding site" evidence="1">
    <location>
        <position position="305"/>
    </location>
    <ligand>
        <name>substrate</name>
    </ligand>
</feature>
<feature type="binding site" evidence="1">
    <location>
        <position position="305"/>
    </location>
    <ligand>
        <name>Zn(2+)</name>
        <dbReference type="ChEBI" id="CHEBI:29105"/>
        <label>2</label>
        <note>catalytic</note>
    </ligand>
</feature>
<feature type="binding site" evidence="1">
    <location>
        <position position="364"/>
    </location>
    <ligand>
        <name>Mg(2+)</name>
        <dbReference type="ChEBI" id="CHEBI:18420"/>
        <note>catalytic</note>
    </ligand>
</feature>
<feature type="binding site" evidence="1">
    <location>
        <position position="364"/>
    </location>
    <ligand>
        <name>substrate</name>
    </ligand>
</feature>
<feature type="binding site" evidence="1">
    <location>
        <position position="364"/>
    </location>
    <ligand>
        <name>Zn(2+)</name>
        <dbReference type="ChEBI" id="CHEBI:29105"/>
        <label>1</label>
        <note>catalytic</note>
    </ligand>
</feature>
<feature type="binding site" evidence="1">
    <location>
        <position position="366"/>
    </location>
    <ligand>
        <name>Mg(2+)</name>
        <dbReference type="ChEBI" id="CHEBI:18420"/>
        <note>catalytic</note>
    </ligand>
</feature>
<feature type="binding site" evidence="1">
    <location>
        <position position="366"/>
    </location>
    <ligand>
        <name>Zn(2+)</name>
        <dbReference type="ChEBI" id="CHEBI:29105"/>
        <label>1</label>
        <note>catalytic</note>
    </ligand>
</feature>
<feature type="binding site" evidence="1">
    <location>
        <position position="366"/>
    </location>
    <ligand>
        <name>Zn(2+)</name>
        <dbReference type="ChEBI" id="CHEBI:29105"/>
        <label>2</label>
        <note>catalytic</note>
    </ligand>
</feature>
<feature type="modified residue" description="N6-succinyllysine" evidence="10">
    <location>
        <position position="45"/>
    </location>
</feature>
<feature type="modified residue" description="Phosphoserine" evidence="4">
    <location>
        <position position="54"/>
    </location>
</feature>
<feature type="modified residue" description="N6-succinyllysine" evidence="10">
    <location>
        <position position="61"/>
    </location>
</feature>
<feature type="modified residue" description="N6-succinyllysine" evidence="10">
    <location>
        <position position="103"/>
    </location>
</feature>
<feature type="modified residue" description="Phosphoserine" evidence="7 8">
    <location>
        <position position="180"/>
    </location>
</feature>
<feature type="modified residue" description="Phosphoserine" evidence="2">
    <location>
        <position position="194"/>
    </location>
</feature>
<feature type="modified residue" description="N6-acetyllysine; alternate" evidence="9">
    <location>
        <position position="221"/>
    </location>
</feature>
<feature type="modified residue" description="N6-succinyllysine; alternate" evidence="10">
    <location>
        <position position="221"/>
    </location>
</feature>
<feature type="modified residue" description="Phosphoserine" evidence="8">
    <location>
        <position position="238"/>
    </location>
</feature>
<feature type="modified residue" description="N6-acetyllysine; alternate" evidence="9">
    <location>
        <position position="455"/>
    </location>
</feature>
<feature type="modified residue" description="N6-succinyllysine; alternate" evidence="10">
    <location>
        <position position="455"/>
    </location>
</feature>
<feature type="modified residue" description="N6-succinyllysine" evidence="10">
    <location>
        <position position="476"/>
    </location>
</feature>
<feature type="modified residue" description="N6-acetyllysine; alternate" evidence="9">
    <location>
        <position position="489"/>
    </location>
</feature>
<feature type="modified residue" description="N6-succinyllysine; alternate" evidence="10">
    <location>
        <position position="489"/>
    </location>
</feature>
<feature type="splice variant" id="VSP_022632" description="In isoform 2." evidence="5">
    <location>
        <begin position="1"/>
        <end position="31"/>
    </location>
</feature>
<feature type="sequence conflict" description="In Ref. 2; CAJ18509." evidence="5" ref="2">
    <original>D</original>
    <variation>G</variation>
    <location>
        <position position="46"/>
    </location>
</feature>
<feature type="sequence conflict" description="In Ref. 2; CAJ18445." evidence="5" ref="2">
    <original>F</original>
    <variation>L</variation>
    <location>
        <position position="93"/>
    </location>
</feature>
<feature type="sequence conflict" description="In Ref. 3; BAB26987." evidence="5" ref="3">
    <original>A</original>
    <variation>D</variation>
    <location>
        <position position="123"/>
    </location>
</feature>
<sequence>MYLLPLPAAARVALRRLGVRGLWDRGLSTADMTKGLVLGIYAKDKDDDLPQFTSAGESFNKLVSGKLREMLNISGPPLKAGKTRTFYGLHQDFPSVVVVGLGKRSAGVDDQENWHEGKENIRAAVAAGCRQVQDLELPSVEVDPCGDAQAAAEGAVLGLYEYDDLKQKKKVAVSAKLHGSGDLEAWEKGVLFASGQNLARHLMESPANEMTPTRFAEIIEKNLKSASSKTKVHIRPKSWIEEQEMGSFLSVAKGSEEPPVFLEIHYMGSPNATEAPLVFVGKGITFDSGGISIKASANMDLMRADMGGAATICSAIVSAAKLNLPINIIGLAPLCENMPSGKANKPGDVVRARNGKTIQVDNTDAEGRLILADALCYAHTFNPKVIINAATLTGAMDVALGSGATGVFTNSSWLWNKLFEASVETGDRVWRMPLFEHYTRQVIDCQLADVNNLGKYRSAGACTAAAFLREFVTHTKWAHLDIAGVMTNKDEIPYLRKGMSGRPTRTLIEFLLRFSKDSS</sequence>
<keyword id="KW-0007">Acetylation</keyword>
<keyword id="KW-0024">Alternative initiation</keyword>
<keyword id="KW-0031">Aminopeptidase</keyword>
<keyword id="KW-0963">Cytoplasm</keyword>
<keyword id="KW-0903">Direct protein sequencing</keyword>
<keyword id="KW-0378">Hydrolase</keyword>
<keyword id="KW-0460">Magnesium</keyword>
<keyword id="KW-0464">Manganese</keyword>
<keyword id="KW-0479">Metal-binding</keyword>
<keyword id="KW-0597">Phosphoprotein</keyword>
<keyword id="KW-0645">Protease</keyword>
<keyword id="KW-1185">Reference proteome</keyword>
<keyword id="KW-0862">Zinc</keyword>
<name>AMPL_MOUSE</name>
<accession>Q9CPY7</accession>
<accession>Q3TFS5</accession>
<accession>Q4FJV1</accession>
<accession>Q4FK15</accession>
<accession>Q99P44</accession>
<accession>Q9CWN8</accession>
<comment type="function">
    <text evidence="1">Cytosolic metallopeptidase that catalyzes the removal of unsubstituted N-terminal hydrophobic amino acids from various peptides. The presence of Zn(2+) ions is essential for the peptidase activity, and the association with other cofactors can modulate the substrate spectificity of the enzyme. For instance, in the presence of Mn(2+), it displays a specific Cys-Gly hydrolyzing activity of Cys-Gly-S-conjugates. Involved in the metabolism of glutathione and in the degradation of glutathione S-conjugates, which may play a role in the control of the cell redox status.</text>
</comment>
<comment type="catalytic activity">
    <reaction evidence="1">
        <text>Release of an N-terminal amino acid, Xaa-|-Yaa-, in which Xaa is preferably Leu, but may be other amino acids including Pro although not Arg or Lys, and Yaa may be Pro. Amino acid amides and methyl esters are also readily hydrolyzed, but rates on arylamides are exceedingly low.</text>
        <dbReference type="EC" id="3.4.11.1"/>
    </reaction>
</comment>
<comment type="catalytic activity">
    <reaction evidence="1">
        <text>an S-substituted L-cysteinylglycine + H2O = an S-substituted L-cysteine + glycine</text>
        <dbReference type="Rhea" id="RHEA:60444"/>
        <dbReference type="ChEBI" id="CHEBI:15377"/>
        <dbReference type="ChEBI" id="CHEBI:57305"/>
        <dbReference type="ChEBI" id="CHEBI:58717"/>
        <dbReference type="ChEBI" id="CHEBI:143103"/>
        <dbReference type="EC" id="3.4.13.23"/>
    </reaction>
    <physiologicalReaction direction="left-to-right" evidence="1">
        <dbReference type="Rhea" id="RHEA:60445"/>
    </physiologicalReaction>
</comment>
<comment type="catalytic activity">
    <reaction evidence="1">
        <text>L-cysteinylglycine + H2O = L-cysteine + glycine</text>
        <dbReference type="Rhea" id="RHEA:28783"/>
        <dbReference type="ChEBI" id="CHEBI:15377"/>
        <dbReference type="ChEBI" id="CHEBI:35235"/>
        <dbReference type="ChEBI" id="CHEBI:57305"/>
        <dbReference type="ChEBI" id="CHEBI:61694"/>
    </reaction>
    <physiologicalReaction direction="left-to-right" evidence="1">
        <dbReference type="Rhea" id="RHEA:28784"/>
    </physiologicalReaction>
</comment>
<comment type="catalytic activity">
    <reaction evidence="4">
        <text>S-benzyl-L-cysteinylglycine + H2O = S-benzyl-L-cysteine + glycine</text>
        <dbReference type="Rhea" id="RHEA:62568"/>
        <dbReference type="ChEBI" id="CHEBI:15377"/>
        <dbReference type="ChEBI" id="CHEBI:57305"/>
        <dbReference type="ChEBI" id="CHEBI:145802"/>
        <dbReference type="ChEBI" id="CHEBI:145803"/>
    </reaction>
    <physiologicalReaction direction="left-to-right" evidence="4">
        <dbReference type="Rhea" id="RHEA:62569"/>
    </physiologicalReaction>
</comment>
<comment type="catalytic activity">
    <reaction evidence="3">
        <text>Release of N-terminal proline from a peptide.</text>
        <dbReference type="EC" id="3.4.11.5"/>
    </reaction>
</comment>
<comment type="cofactor">
    <cofactor evidence="1">
        <name>Zn(2+)</name>
        <dbReference type="ChEBI" id="CHEBI:29105"/>
    </cofactor>
    <cofactor evidence="1">
        <name>Mn(2+)</name>
        <dbReference type="ChEBI" id="CHEBI:29035"/>
    </cofactor>
    <text evidence="1">Binds two metal ions per subunit. Two metal binding sites with different affinities are located in the enzyme active site and can be occupied in vitro by different metals: site 1 is occupied by Zn(2+), Mn(2+), Mg(2+) or Co(2+), while the tight binding site 2 can be occupied by only Zn(2+) or Co(2+). One Zn(2+) ion is tightly bound to site 2 and essential for enzyme activity in vivo, while site 1 can be occupied by different metals to give different enzymatic activities. Mn(2+) is required for Cys-Gly hydrolysis activity. A third metal binding site may serve a structural role, possibly stabilizing part of the interface between the N-terminal and the catalytic domain.</text>
</comment>
<comment type="subunit">
    <text evidence="1">Homohexamer.</text>
</comment>
<comment type="subcellular location">
    <subcellularLocation>
        <location evidence="4">Cytoplasm</location>
    </subcellularLocation>
</comment>
<comment type="alternative products">
    <event type="alternative initiation"/>
    <isoform>
        <id>Q9CPY7-1</id>
        <name>1</name>
        <sequence type="displayed"/>
    </isoform>
    <isoform>
        <id>Q9CPY7-2</id>
        <name>2</name>
        <sequence type="described" ref="VSP_022632"/>
    </isoform>
</comment>
<comment type="similarity">
    <text evidence="5">Belongs to the peptidase M17 family.</text>
</comment>
<comment type="sequence caution" evidence="5">
    <conflict type="erroneous initiation">
        <sequence resource="EMBL-CDS" id="BAB23958"/>
    </conflict>
</comment>
<comment type="sequence caution" evidence="5">
    <conflict type="erroneous initiation">
        <sequence resource="EMBL-CDS" id="BAB25769"/>
    </conflict>
</comment>
<comment type="sequence caution" evidence="5">
    <conflict type="erroneous initiation">
        <sequence resource="EMBL-CDS" id="BAB27726"/>
    </conflict>
</comment>
<comment type="sequence caution" evidence="5">
    <conflict type="erroneous initiation">
        <sequence resource="EMBL-CDS" id="BAE39141"/>
    </conflict>
</comment>
<comment type="sequence caution" evidence="5">
    <conflict type="erroneous initiation">
        <sequence resource="EMBL-CDS" id="BAE40823"/>
    </conflict>
</comment>
<protein>
    <recommendedName>
        <fullName evidence="5">Cytosol aminopeptidase</fullName>
        <ecNumber evidence="1">3.4.11.1</ecNumber>
    </recommendedName>
    <alternativeName>
        <fullName evidence="1">Cysteinylglycine-S-conjugate dipeptidase</fullName>
        <ecNumber evidence="1">3.4.13.23</ecNumber>
    </alternativeName>
    <alternativeName>
        <fullName evidence="6">Leucine aminopeptidase 3</fullName>
        <shortName>LAP-3</shortName>
    </alternativeName>
    <alternativeName>
        <fullName evidence="6">Leucyl aminopeptidase</fullName>
    </alternativeName>
    <alternativeName>
        <fullName evidence="6">Peptidase S</fullName>
    </alternativeName>
    <alternativeName>
        <fullName evidence="3">Proline aminopeptidase</fullName>
        <ecNumber evidence="3">3.4.11.5</ecNumber>
    </alternativeName>
    <alternativeName>
        <fullName>Prolyl aminopeptidase</fullName>
    </alternativeName>
</protein>
<gene>
    <name evidence="6" type="primary">Lap3</name>
    <name type="synonym">Lapep</name>
</gene>
<reference key="1">
    <citation type="submission" date="2001-01" db="EMBL/GenBank/DDBJ databases">
        <title>Mammalian Lap-D proteins related to ovarian development and differentiation.</title>
        <authorList>
            <person name="Zhuang D.Z."/>
            <person name="Gunnarsson D."/>
            <person name="Toffia O."/>
            <person name="Lind M."/>
            <person name="Lundgren P."/>
            <person name="Selstam G."/>
        </authorList>
    </citation>
    <scope>NUCLEOTIDE SEQUENCE [MRNA]</scope>
    <source>
        <strain>C57BL/6J</strain>
    </source>
</reference>
<reference key="2">
    <citation type="submission" date="2005-07" db="EMBL/GenBank/DDBJ databases">
        <title>Cloning of mouse full open reading frames in Gateway(R) system entry vector (pDONR201).</title>
        <authorList>
            <person name="Ebert L."/>
            <person name="Muenstermann E."/>
            <person name="Schatten R."/>
            <person name="Henze S."/>
            <person name="Bohn E."/>
            <person name="Mollenhauer J."/>
            <person name="Wiemann S."/>
            <person name="Schick M."/>
            <person name="Korn B."/>
        </authorList>
    </citation>
    <scope>NUCLEOTIDE SEQUENCE [LARGE SCALE MRNA]</scope>
</reference>
<reference key="3">
    <citation type="journal article" date="2005" name="Science">
        <title>The transcriptional landscape of the mammalian genome.</title>
        <authorList>
            <person name="Carninci P."/>
            <person name="Kasukawa T."/>
            <person name="Katayama S."/>
            <person name="Gough J."/>
            <person name="Frith M.C."/>
            <person name="Maeda N."/>
            <person name="Oyama R."/>
            <person name="Ravasi T."/>
            <person name="Lenhard B."/>
            <person name="Wells C."/>
            <person name="Kodzius R."/>
            <person name="Shimokawa K."/>
            <person name="Bajic V.B."/>
            <person name="Brenner S.E."/>
            <person name="Batalov S."/>
            <person name="Forrest A.R."/>
            <person name="Zavolan M."/>
            <person name="Davis M.J."/>
            <person name="Wilming L.G."/>
            <person name="Aidinis V."/>
            <person name="Allen J.E."/>
            <person name="Ambesi-Impiombato A."/>
            <person name="Apweiler R."/>
            <person name="Aturaliya R.N."/>
            <person name="Bailey T.L."/>
            <person name="Bansal M."/>
            <person name="Baxter L."/>
            <person name="Beisel K.W."/>
            <person name="Bersano T."/>
            <person name="Bono H."/>
            <person name="Chalk A.M."/>
            <person name="Chiu K.P."/>
            <person name="Choudhary V."/>
            <person name="Christoffels A."/>
            <person name="Clutterbuck D.R."/>
            <person name="Crowe M.L."/>
            <person name="Dalla E."/>
            <person name="Dalrymple B.P."/>
            <person name="de Bono B."/>
            <person name="Della Gatta G."/>
            <person name="di Bernardo D."/>
            <person name="Down T."/>
            <person name="Engstrom P."/>
            <person name="Fagiolini M."/>
            <person name="Faulkner G."/>
            <person name="Fletcher C.F."/>
            <person name="Fukushima T."/>
            <person name="Furuno M."/>
            <person name="Futaki S."/>
            <person name="Gariboldi M."/>
            <person name="Georgii-Hemming P."/>
            <person name="Gingeras T.R."/>
            <person name="Gojobori T."/>
            <person name="Green R.E."/>
            <person name="Gustincich S."/>
            <person name="Harbers M."/>
            <person name="Hayashi Y."/>
            <person name="Hensch T.K."/>
            <person name="Hirokawa N."/>
            <person name="Hill D."/>
            <person name="Huminiecki L."/>
            <person name="Iacono M."/>
            <person name="Ikeo K."/>
            <person name="Iwama A."/>
            <person name="Ishikawa T."/>
            <person name="Jakt M."/>
            <person name="Kanapin A."/>
            <person name="Katoh M."/>
            <person name="Kawasawa Y."/>
            <person name="Kelso J."/>
            <person name="Kitamura H."/>
            <person name="Kitano H."/>
            <person name="Kollias G."/>
            <person name="Krishnan S.P."/>
            <person name="Kruger A."/>
            <person name="Kummerfeld S.K."/>
            <person name="Kurochkin I.V."/>
            <person name="Lareau L.F."/>
            <person name="Lazarevic D."/>
            <person name="Lipovich L."/>
            <person name="Liu J."/>
            <person name="Liuni S."/>
            <person name="McWilliam S."/>
            <person name="Madan Babu M."/>
            <person name="Madera M."/>
            <person name="Marchionni L."/>
            <person name="Matsuda H."/>
            <person name="Matsuzawa S."/>
            <person name="Miki H."/>
            <person name="Mignone F."/>
            <person name="Miyake S."/>
            <person name="Morris K."/>
            <person name="Mottagui-Tabar S."/>
            <person name="Mulder N."/>
            <person name="Nakano N."/>
            <person name="Nakauchi H."/>
            <person name="Ng P."/>
            <person name="Nilsson R."/>
            <person name="Nishiguchi S."/>
            <person name="Nishikawa S."/>
            <person name="Nori F."/>
            <person name="Ohara O."/>
            <person name="Okazaki Y."/>
            <person name="Orlando V."/>
            <person name="Pang K.C."/>
            <person name="Pavan W.J."/>
            <person name="Pavesi G."/>
            <person name="Pesole G."/>
            <person name="Petrovsky N."/>
            <person name="Piazza S."/>
            <person name="Reed J."/>
            <person name="Reid J.F."/>
            <person name="Ring B.Z."/>
            <person name="Ringwald M."/>
            <person name="Rost B."/>
            <person name="Ruan Y."/>
            <person name="Salzberg S.L."/>
            <person name="Sandelin A."/>
            <person name="Schneider C."/>
            <person name="Schoenbach C."/>
            <person name="Sekiguchi K."/>
            <person name="Semple C.A."/>
            <person name="Seno S."/>
            <person name="Sessa L."/>
            <person name="Sheng Y."/>
            <person name="Shibata Y."/>
            <person name="Shimada H."/>
            <person name="Shimada K."/>
            <person name="Silva D."/>
            <person name="Sinclair B."/>
            <person name="Sperling S."/>
            <person name="Stupka E."/>
            <person name="Sugiura K."/>
            <person name="Sultana R."/>
            <person name="Takenaka Y."/>
            <person name="Taki K."/>
            <person name="Tammoja K."/>
            <person name="Tan S.L."/>
            <person name="Tang S."/>
            <person name="Taylor M.S."/>
            <person name="Tegner J."/>
            <person name="Teichmann S.A."/>
            <person name="Ueda H.R."/>
            <person name="van Nimwegen E."/>
            <person name="Verardo R."/>
            <person name="Wei C.L."/>
            <person name="Yagi K."/>
            <person name="Yamanishi H."/>
            <person name="Zabarovsky E."/>
            <person name="Zhu S."/>
            <person name="Zimmer A."/>
            <person name="Hide W."/>
            <person name="Bult C."/>
            <person name="Grimmond S.M."/>
            <person name="Teasdale R.D."/>
            <person name="Liu E.T."/>
            <person name="Brusic V."/>
            <person name="Quackenbush J."/>
            <person name="Wahlestedt C."/>
            <person name="Mattick J.S."/>
            <person name="Hume D.A."/>
            <person name="Kai C."/>
            <person name="Sasaki D."/>
            <person name="Tomaru Y."/>
            <person name="Fukuda S."/>
            <person name="Kanamori-Katayama M."/>
            <person name="Suzuki M."/>
            <person name="Aoki J."/>
            <person name="Arakawa T."/>
            <person name="Iida J."/>
            <person name="Imamura K."/>
            <person name="Itoh M."/>
            <person name="Kato T."/>
            <person name="Kawaji H."/>
            <person name="Kawagashira N."/>
            <person name="Kawashima T."/>
            <person name="Kojima M."/>
            <person name="Kondo S."/>
            <person name="Konno H."/>
            <person name="Nakano K."/>
            <person name="Ninomiya N."/>
            <person name="Nishio T."/>
            <person name="Okada M."/>
            <person name="Plessy C."/>
            <person name="Shibata K."/>
            <person name="Shiraki T."/>
            <person name="Suzuki S."/>
            <person name="Tagami M."/>
            <person name="Waki K."/>
            <person name="Watahiki A."/>
            <person name="Okamura-Oho Y."/>
            <person name="Suzuki H."/>
            <person name="Kawai J."/>
            <person name="Hayashizaki Y."/>
        </authorList>
    </citation>
    <scope>NUCLEOTIDE SEQUENCE [LARGE SCALE MRNA]</scope>
    <source>
        <strain>C57BL/6J</strain>
        <strain>NOD</strain>
        <tissue>Amnion</tissue>
        <tissue>Bone marrow</tissue>
        <tissue>Cerebellum</tissue>
        <tissue>Embryo</tissue>
        <tissue>Kidney</tissue>
        <tissue>Lung</tissue>
        <tissue>Placenta</tissue>
        <tissue>Small intestine</tissue>
    </source>
</reference>
<reference key="4">
    <citation type="journal article" date="2004" name="Genome Res.">
        <title>The status, quality, and expansion of the NIH full-length cDNA project: the Mammalian Gene Collection (MGC).</title>
        <authorList>
            <consortium name="The MGC Project Team"/>
        </authorList>
    </citation>
    <scope>NUCLEOTIDE SEQUENCE [LARGE SCALE MRNA]</scope>
    <source>
        <strain>FVB/N</strain>
        <tissue>Mammary tumor</tissue>
    </source>
</reference>
<reference key="5">
    <citation type="submission" date="2007-04" db="UniProtKB">
        <authorList>
            <person name="Lubec G."/>
            <person name="Kang S.U."/>
        </authorList>
    </citation>
    <scope>PROTEIN SEQUENCE OF 474-481</scope>
    <scope>IDENTIFICATION BY MASS SPECTROMETRY</scope>
    <source>
        <strain>C57BL/6J</strain>
        <tissue>Brain</tissue>
    </source>
</reference>
<reference key="6">
    <citation type="journal article" date="2007" name="Proc. Natl. Acad. Sci. U.S.A.">
        <title>Large-scale phosphorylation analysis of mouse liver.</title>
        <authorList>
            <person name="Villen J."/>
            <person name="Beausoleil S.A."/>
            <person name="Gerber S.A."/>
            <person name="Gygi S.P."/>
        </authorList>
    </citation>
    <scope>PHOSPHORYLATION [LARGE SCALE ANALYSIS] AT SER-180</scope>
    <scope>IDENTIFICATION BY MASS SPECTROMETRY [LARGE SCALE ANALYSIS]</scope>
    <source>
        <tissue>Liver</tissue>
    </source>
</reference>
<reference key="7">
    <citation type="journal article" date="2010" name="Cell">
        <title>A tissue-specific atlas of mouse protein phosphorylation and expression.</title>
        <authorList>
            <person name="Huttlin E.L."/>
            <person name="Jedrychowski M.P."/>
            <person name="Elias J.E."/>
            <person name="Goswami T."/>
            <person name="Rad R."/>
            <person name="Beausoleil S.A."/>
            <person name="Villen J."/>
            <person name="Haas W."/>
            <person name="Sowa M.E."/>
            <person name="Gygi S.P."/>
        </authorList>
    </citation>
    <scope>PHOSPHORYLATION [LARGE SCALE ANALYSIS] AT SER-180 AND SER-238</scope>
    <scope>IDENTIFICATION BY MASS SPECTROMETRY [LARGE SCALE ANALYSIS]</scope>
    <source>
        <tissue>Brain</tissue>
        <tissue>Brown adipose tissue</tissue>
        <tissue>Heart</tissue>
        <tissue>Kidney</tissue>
        <tissue>Liver</tissue>
        <tissue>Lung</tissue>
        <tissue>Pancreas</tissue>
        <tissue>Spleen</tissue>
        <tissue>Testis</tissue>
    </source>
</reference>
<reference key="8">
    <citation type="journal article" date="2013" name="Mol. Cell">
        <title>SIRT5-mediated lysine desuccinylation impacts diverse metabolic pathways.</title>
        <authorList>
            <person name="Park J."/>
            <person name="Chen Y."/>
            <person name="Tishkoff D.X."/>
            <person name="Peng C."/>
            <person name="Tan M."/>
            <person name="Dai L."/>
            <person name="Xie Z."/>
            <person name="Zhang Y."/>
            <person name="Zwaans B.M."/>
            <person name="Skinner M.E."/>
            <person name="Lombard D.B."/>
            <person name="Zhao Y."/>
        </authorList>
    </citation>
    <scope>SUCCINYLATION [LARGE SCALE ANALYSIS] AT LYS-45; LYS-61; LYS-103; LYS-221; LYS-455; LYS-476 AND LYS-489</scope>
    <scope>IDENTIFICATION BY MASS SPECTROMETRY [LARGE SCALE ANALYSIS]</scope>
    <source>
        <tissue>Embryonic fibroblast</tissue>
        <tissue>Liver</tissue>
    </source>
</reference>
<reference key="9">
    <citation type="journal article" date="2013" name="Proc. Natl. Acad. Sci. U.S.A.">
        <title>Label-free quantitative proteomics of the lysine acetylome in mitochondria identifies substrates of SIRT3 in metabolic pathways.</title>
        <authorList>
            <person name="Rardin M.J."/>
            <person name="Newman J.C."/>
            <person name="Held J.M."/>
            <person name="Cusack M.P."/>
            <person name="Sorensen D.J."/>
            <person name="Li B."/>
            <person name="Schilling B."/>
            <person name="Mooney S.D."/>
            <person name="Kahn C.R."/>
            <person name="Verdin E."/>
            <person name="Gibson B.W."/>
        </authorList>
    </citation>
    <scope>ACETYLATION [LARGE SCALE ANALYSIS] AT LYS-221; LYS-455 AND LYS-489</scope>
    <scope>IDENTIFICATION BY MASS SPECTROMETRY [LARGE SCALE ANALYSIS]</scope>
    <source>
        <tissue>Liver</tissue>
    </source>
</reference>
<proteinExistence type="evidence at protein level"/>
<organism>
    <name type="scientific">Mus musculus</name>
    <name type="common">Mouse</name>
    <dbReference type="NCBI Taxonomy" id="10090"/>
    <lineage>
        <taxon>Eukaryota</taxon>
        <taxon>Metazoa</taxon>
        <taxon>Chordata</taxon>
        <taxon>Craniata</taxon>
        <taxon>Vertebrata</taxon>
        <taxon>Euteleostomi</taxon>
        <taxon>Mammalia</taxon>
        <taxon>Eutheria</taxon>
        <taxon>Euarchontoglires</taxon>
        <taxon>Glires</taxon>
        <taxon>Rodentia</taxon>
        <taxon>Myomorpha</taxon>
        <taxon>Muroidea</taxon>
        <taxon>Muridae</taxon>
        <taxon>Murinae</taxon>
        <taxon>Mus</taxon>
        <taxon>Mus</taxon>
    </lineage>
</organism>
<evidence type="ECO:0000250" key="1">
    <source>
        <dbReference type="UniProtKB" id="P00727"/>
    </source>
</evidence>
<evidence type="ECO:0000250" key="2">
    <source>
        <dbReference type="UniProtKB" id="P28838"/>
    </source>
</evidence>
<evidence type="ECO:0000250" key="3">
    <source>
        <dbReference type="UniProtKB" id="P28839"/>
    </source>
</evidence>
<evidence type="ECO:0000250" key="4">
    <source>
        <dbReference type="UniProtKB" id="Q68FS4"/>
    </source>
</evidence>
<evidence type="ECO:0000305" key="5"/>
<evidence type="ECO:0000312" key="6">
    <source>
        <dbReference type="MGI" id="MGI:1914238"/>
    </source>
</evidence>
<evidence type="ECO:0007744" key="7">
    <source>
    </source>
</evidence>
<evidence type="ECO:0007744" key="8">
    <source>
    </source>
</evidence>
<evidence type="ECO:0007744" key="9">
    <source>
    </source>
</evidence>
<evidence type="ECO:0007744" key="10">
    <source>
    </source>
</evidence>
<dbReference type="EC" id="3.4.11.1" evidence="1"/>
<dbReference type="EC" id="3.4.13.23" evidence="1"/>
<dbReference type="EC" id="3.4.11.5" evidence="3"/>
<dbReference type="EMBL" id="AF334160">
    <property type="protein sequence ID" value="AAK13495.1"/>
    <property type="molecule type" value="mRNA"/>
</dbReference>
<dbReference type="EMBL" id="CT010237">
    <property type="protein sequence ID" value="CAJ18445.1"/>
    <property type="molecule type" value="mRNA"/>
</dbReference>
<dbReference type="EMBL" id="CT010301">
    <property type="protein sequence ID" value="CAJ18509.1"/>
    <property type="molecule type" value="mRNA"/>
</dbReference>
<dbReference type="EMBL" id="AK002819">
    <property type="status" value="NOT_ANNOTATED_CDS"/>
    <property type="molecule type" value="mRNA"/>
</dbReference>
<dbReference type="EMBL" id="AK005334">
    <property type="protein sequence ID" value="BAB23958.1"/>
    <property type="status" value="ALT_INIT"/>
    <property type="molecule type" value="mRNA"/>
</dbReference>
<dbReference type="EMBL" id="AK008600">
    <property type="protein sequence ID" value="BAB25769.1"/>
    <property type="status" value="ALT_INIT"/>
    <property type="molecule type" value="mRNA"/>
</dbReference>
<dbReference type="EMBL" id="AK010502">
    <property type="protein sequence ID" value="BAB26987.1"/>
    <property type="molecule type" value="mRNA"/>
</dbReference>
<dbReference type="EMBL" id="AK011604">
    <property type="protein sequence ID" value="BAB27726.1"/>
    <property type="status" value="ALT_INIT"/>
    <property type="molecule type" value="mRNA"/>
</dbReference>
<dbReference type="EMBL" id="AK166958">
    <property type="protein sequence ID" value="BAE39141.1"/>
    <property type="status" value="ALT_INIT"/>
    <property type="molecule type" value="mRNA"/>
</dbReference>
<dbReference type="EMBL" id="AK169032">
    <property type="protein sequence ID" value="BAE40823.1"/>
    <property type="status" value="ALT_INIT"/>
    <property type="molecule type" value="mRNA"/>
</dbReference>
<dbReference type="EMBL" id="BC016536">
    <property type="protein sequence ID" value="AAH16536.1"/>
    <property type="molecule type" value="mRNA"/>
</dbReference>
<dbReference type="CCDS" id="CCDS19274.1">
    <molecule id="Q9CPY7-1"/>
</dbReference>
<dbReference type="RefSeq" id="NP_077754.3">
    <molecule id="Q9CPY7-1"/>
    <property type="nucleotide sequence ID" value="NM_024434.6"/>
</dbReference>
<dbReference type="SMR" id="Q9CPY7"/>
<dbReference type="BioGRID" id="211856">
    <property type="interactions" value="24"/>
</dbReference>
<dbReference type="FunCoup" id="Q9CPY7">
    <property type="interactions" value="1725"/>
</dbReference>
<dbReference type="IntAct" id="Q9CPY7">
    <property type="interactions" value="1"/>
</dbReference>
<dbReference type="STRING" id="10090.ENSMUSP00000040222"/>
<dbReference type="MEROPS" id="M17.001"/>
<dbReference type="GlyGen" id="Q9CPY7">
    <property type="glycosylation" value="1 site, 1 O-linked glycan (1 site)"/>
</dbReference>
<dbReference type="iPTMnet" id="Q9CPY7"/>
<dbReference type="PhosphoSitePlus" id="Q9CPY7"/>
<dbReference type="SwissPalm" id="Q9CPY7"/>
<dbReference type="REPRODUCTION-2DPAGE" id="IPI00828469"/>
<dbReference type="CPTAC" id="non-CPTAC-3688"/>
<dbReference type="CPTAC" id="non-CPTAC-3689"/>
<dbReference type="jPOST" id="Q9CPY7"/>
<dbReference type="PaxDb" id="10090-ENSMUSP00000040222"/>
<dbReference type="PeptideAtlas" id="Q9CPY7"/>
<dbReference type="ProteomicsDB" id="296032">
    <molecule id="Q9CPY7-1"/>
</dbReference>
<dbReference type="ProteomicsDB" id="296033">
    <molecule id="Q9CPY7-2"/>
</dbReference>
<dbReference type="Pumba" id="Q9CPY7"/>
<dbReference type="Antibodypedia" id="23080">
    <property type="antibodies" value="245 antibodies from 33 providers"/>
</dbReference>
<dbReference type="DNASU" id="66988"/>
<dbReference type="Ensembl" id="ENSMUST00000046122.11">
    <molecule id="Q9CPY7-1"/>
    <property type="protein sequence ID" value="ENSMUSP00000040222.7"/>
    <property type="gene ID" value="ENSMUSG00000039682.13"/>
</dbReference>
<dbReference type="GeneID" id="66988"/>
<dbReference type="KEGG" id="mmu:66988"/>
<dbReference type="UCSC" id="uc008xiy.2">
    <molecule id="Q9CPY7-1"/>
    <property type="organism name" value="mouse"/>
</dbReference>
<dbReference type="AGR" id="MGI:1914238"/>
<dbReference type="CTD" id="51056"/>
<dbReference type="MGI" id="MGI:1914238">
    <property type="gene designation" value="Lap3"/>
</dbReference>
<dbReference type="VEuPathDB" id="HostDB:ENSMUSG00000039682"/>
<dbReference type="eggNOG" id="KOG2597">
    <property type="taxonomic scope" value="Eukaryota"/>
</dbReference>
<dbReference type="GeneTree" id="ENSGT00530000063255"/>
<dbReference type="HOGENOM" id="CLU_013734_1_2_1"/>
<dbReference type="InParanoid" id="Q9CPY7"/>
<dbReference type="OMA" id="WPMPLPE"/>
<dbReference type="OrthoDB" id="412814at2759"/>
<dbReference type="PhylomeDB" id="Q9CPY7"/>
<dbReference type="TreeFam" id="TF314954"/>
<dbReference type="BioGRID-ORCS" id="66988">
    <property type="hits" value="4 hits in 79 CRISPR screens"/>
</dbReference>
<dbReference type="ChiTaRS" id="Lap3">
    <property type="organism name" value="mouse"/>
</dbReference>
<dbReference type="PRO" id="PR:Q9CPY7"/>
<dbReference type="Proteomes" id="UP000000589">
    <property type="component" value="Chromosome 5"/>
</dbReference>
<dbReference type="RNAct" id="Q9CPY7">
    <property type="molecule type" value="protein"/>
</dbReference>
<dbReference type="Bgee" id="ENSMUSG00000039682">
    <property type="expression patterns" value="Expressed in small intestine Peyer's patch and 273 other cell types or tissues"/>
</dbReference>
<dbReference type="ExpressionAtlas" id="Q9CPY7">
    <property type="expression patterns" value="baseline and differential"/>
</dbReference>
<dbReference type="GO" id="GO:0005739">
    <property type="term" value="C:mitochondrion"/>
    <property type="evidence" value="ECO:0007005"/>
    <property type="project" value="MGI"/>
</dbReference>
<dbReference type="GO" id="GO:0005802">
    <property type="term" value="C:trans-Golgi network"/>
    <property type="evidence" value="ECO:0000266"/>
    <property type="project" value="MGI"/>
</dbReference>
<dbReference type="GO" id="GO:0004180">
    <property type="term" value="F:carboxypeptidase activity"/>
    <property type="evidence" value="ECO:0007669"/>
    <property type="project" value="RHEA"/>
</dbReference>
<dbReference type="GO" id="GO:0030145">
    <property type="term" value="F:manganese ion binding"/>
    <property type="evidence" value="ECO:0007669"/>
    <property type="project" value="InterPro"/>
</dbReference>
<dbReference type="GO" id="GO:0070006">
    <property type="term" value="F:metalloaminopeptidase activity"/>
    <property type="evidence" value="ECO:0007669"/>
    <property type="project" value="InterPro"/>
</dbReference>
<dbReference type="GO" id="GO:0008233">
    <property type="term" value="F:peptidase activity"/>
    <property type="evidence" value="ECO:0000314"/>
    <property type="project" value="MGI"/>
</dbReference>
<dbReference type="GO" id="GO:0006508">
    <property type="term" value="P:proteolysis"/>
    <property type="evidence" value="ECO:0007669"/>
    <property type="project" value="UniProtKB-KW"/>
</dbReference>
<dbReference type="CDD" id="cd00433">
    <property type="entry name" value="Peptidase_M17"/>
    <property type="match status" value="1"/>
</dbReference>
<dbReference type="FunFam" id="3.40.220.10:FF:000005">
    <property type="entry name" value="cytosol aminopeptidase"/>
    <property type="match status" value="1"/>
</dbReference>
<dbReference type="FunFam" id="3.40.630.10:FF:000031">
    <property type="entry name" value="cytosol aminopeptidase"/>
    <property type="match status" value="1"/>
</dbReference>
<dbReference type="Gene3D" id="3.40.220.10">
    <property type="entry name" value="Leucine Aminopeptidase, subunit E, domain 1"/>
    <property type="match status" value="1"/>
</dbReference>
<dbReference type="Gene3D" id="3.40.630.10">
    <property type="entry name" value="Zn peptidases"/>
    <property type="match status" value="1"/>
</dbReference>
<dbReference type="HAMAP" id="MF_00181">
    <property type="entry name" value="Cytosol_peptidase_M17"/>
    <property type="match status" value="1"/>
</dbReference>
<dbReference type="InterPro" id="IPR011356">
    <property type="entry name" value="Leucine_aapep/pepB"/>
</dbReference>
<dbReference type="InterPro" id="IPR043472">
    <property type="entry name" value="Macro_dom-like"/>
</dbReference>
<dbReference type="InterPro" id="IPR000819">
    <property type="entry name" value="Peptidase_M17_C"/>
</dbReference>
<dbReference type="InterPro" id="IPR023042">
    <property type="entry name" value="Peptidase_M17_leu_NH2_pept"/>
</dbReference>
<dbReference type="InterPro" id="IPR008283">
    <property type="entry name" value="Peptidase_M17_N"/>
</dbReference>
<dbReference type="PANTHER" id="PTHR11963:SF23">
    <property type="entry name" value="CYTOSOL AMINOPEPTIDASE"/>
    <property type="match status" value="1"/>
</dbReference>
<dbReference type="PANTHER" id="PTHR11963">
    <property type="entry name" value="LEUCINE AMINOPEPTIDASE-RELATED"/>
    <property type="match status" value="1"/>
</dbReference>
<dbReference type="Pfam" id="PF00883">
    <property type="entry name" value="Peptidase_M17"/>
    <property type="match status" value="1"/>
</dbReference>
<dbReference type="Pfam" id="PF02789">
    <property type="entry name" value="Peptidase_M17_N"/>
    <property type="match status" value="1"/>
</dbReference>
<dbReference type="PRINTS" id="PR00481">
    <property type="entry name" value="LAMNOPPTDASE"/>
</dbReference>
<dbReference type="SUPFAM" id="SSF52949">
    <property type="entry name" value="Macro domain-like"/>
    <property type="match status" value="1"/>
</dbReference>
<dbReference type="SUPFAM" id="SSF53187">
    <property type="entry name" value="Zn-dependent exopeptidases"/>
    <property type="match status" value="1"/>
</dbReference>
<dbReference type="PROSITE" id="PS00631">
    <property type="entry name" value="CYTOSOL_AP"/>
    <property type="match status" value="1"/>
</dbReference>